<name>HDFR_ECOBW</name>
<keyword id="KW-0238">DNA-binding</keyword>
<keyword id="KW-0678">Repressor</keyword>
<keyword id="KW-0804">Transcription</keyword>
<keyword id="KW-0805">Transcription regulation</keyword>
<feature type="chain" id="PRO_1000214031" description="HTH-type transcriptional regulator HdfR">
    <location>
        <begin position="1"/>
        <end position="279"/>
    </location>
</feature>
<feature type="domain" description="HTH lysR-type" evidence="1">
    <location>
        <begin position="1"/>
        <end position="58"/>
    </location>
</feature>
<feature type="DNA-binding region" description="H-T-H motif" evidence="1">
    <location>
        <begin position="18"/>
        <end position="37"/>
    </location>
</feature>
<evidence type="ECO:0000255" key="1">
    <source>
        <dbReference type="HAMAP-Rule" id="MF_01233"/>
    </source>
</evidence>
<evidence type="ECO:0000305" key="2"/>
<sequence>MDTELLKTFLEVSRTRHFGRAAESLYLTQSAVSFRIRQLENQLGVNLFTRHRNNIRLTAAGEKLLPYAETLMSTWQAARKEVAHTSRHNEFSIGASASLWECMLNQWLGRLYQNQDAHTGLQFEARIAQRQSLVKQLHERQLDLLITTEAPKMDEFSSQLLGYFTLALYTSAPSKLKGDLNYLRLEWGPDFQQHEAGLIGADEVPILTTSSAELAQQQIAMLNGCTWLPVSWARKKGGLHTVVDSTTLSRPLYAIWLQNSDKNALIRDLLKINVLDEVY</sequence>
<proteinExistence type="inferred from homology"/>
<organism>
    <name type="scientific">Escherichia coli (strain K12 / MC4100 / BW2952)</name>
    <dbReference type="NCBI Taxonomy" id="595496"/>
    <lineage>
        <taxon>Bacteria</taxon>
        <taxon>Pseudomonadati</taxon>
        <taxon>Pseudomonadota</taxon>
        <taxon>Gammaproteobacteria</taxon>
        <taxon>Enterobacterales</taxon>
        <taxon>Enterobacteriaceae</taxon>
        <taxon>Escherichia</taxon>
    </lineage>
</organism>
<accession>C4ZZ35</accession>
<gene>
    <name evidence="1" type="primary">hdfR</name>
    <name type="ordered locus">BWG_3450</name>
</gene>
<protein>
    <recommendedName>
        <fullName evidence="1">HTH-type transcriptional regulator HdfR</fullName>
    </recommendedName>
    <alternativeName>
        <fullName evidence="1">H-NS-dependent flhDC regulator</fullName>
    </alternativeName>
</protein>
<dbReference type="EMBL" id="CP001396">
    <property type="protein sequence ID" value="ACR62950.1"/>
    <property type="molecule type" value="Genomic_DNA"/>
</dbReference>
<dbReference type="RefSeq" id="WP_000379245.1">
    <property type="nucleotide sequence ID" value="NC_012759.1"/>
</dbReference>
<dbReference type="SMR" id="C4ZZ35"/>
<dbReference type="GeneID" id="93778187"/>
<dbReference type="KEGG" id="ebw:BWG_3450"/>
<dbReference type="HOGENOM" id="CLU_039613_8_2_6"/>
<dbReference type="GO" id="GO:0003677">
    <property type="term" value="F:DNA binding"/>
    <property type="evidence" value="ECO:0007669"/>
    <property type="project" value="UniProtKB-KW"/>
</dbReference>
<dbReference type="GO" id="GO:0003700">
    <property type="term" value="F:DNA-binding transcription factor activity"/>
    <property type="evidence" value="ECO:0007669"/>
    <property type="project" value="UniProtKB-UniRule"/>
</dbReference>
<dbReference type="GO" id="GO:0045892">
    <property type="term" value="P:negative regulation of DNA-templated transcription"/>
    <property type="evidence" value="ECO:0007669"/>
    <property type="project" value="UniProtKB-UniRule"/>
</dbReference>
<dbReference type="FunFam" id="1.10.10.10:FF:000001">
    <property type="entry name" value="LysR family transcriptional regulator"/>
    <property type="match status" value="1"/>
</dbReference>
<dbReference type="Gene3D" id="3.40.190.10">
    <property type="entry name" value="Periplasmic binding protein-like II"/>
    <property type="match status" value="2"/>
</dbReference>
<dbReference type="Gene3D" id="1.10.10.10">
    <property type="entry name" value="Winged helix-like DNA-binding domain superfamily/Winged helix DNA-binding domain"/>
    <property type="match status" value="1"/>
</dbReference>
<dbReference type="HAMAP" id="MF_01233">
    <property type="entry name" value="HTH_type_HdfR"/>
    <property type="match status" value="1"/>
</dbReference>
<dbReference type="InterPro" id="IPR050176">
    <property type="entry name" value="LTTR"/>
</dbReference>
<dbReference type="InterPro" id="IPR005119">
    <property type="entry name" value="LysR_subst-bd"/>
</dbReference>
<dbReference type="InterPro" id="IPR020890">
    <property type="entry name" value="Tscrpt_reg_HTH_HdfR"/>
</dbReference>
<dbReference type="InterPro" id="IPR000847">
    <property type="entry name" value="Tscrpt_reg_HTH_LysR"/>
</dbReference>
<dbReference type="InterPro" id="IPR036388">
    <property type="entry name" value="WH-like_DNA-bd_sf"/>
</dbReference>
<dbReference type="InterPro" id="IPR036390">
    <property type="entry name" value="WH_DNA-bd_sf"/>
</dbReference>
<dbReference type="NCBIfam" id="NF002946">
    <property type="entry name" value="PRK03601.1"/>
    <property type="match status" value="1"/>
</dbReference>
<dbReference type="PANTHER" id="PTHR30579:SF8">
    <property type="entry name" value="HTH-TYPE TRANSCRIPTIONAL REGULATOR HDFR"/>
    <property type="match status" value="1"/>
</dbReference>
<dbReference type="PANTHER" id="PTHR30579">
    <property type="entry name" value="TRANSCRIPTIONAL REGULATOR"/>
    <property type="match status" value="1"/>
</dbReference>
<dbReference type="Pfam" id="PF00126">
    <property type="entry name" value="HTH_1"/>
    <property type="match status" value="1"/>
</dbReference>
<dbReference type="Pfam" id="PF03466">
    <property type="entry name" value="LysR_substrate"/>
    <property type="match status" value="1"/>
</dbReference>
<dbReference type="PRINTS" id="PR00039">
    <property type="entry name" value="HTHLYSR"/>
</dbReference>
<dbReference type="SUPFAM" id="SSF53850">
    <property type="entry name" value="Periplasmic binding protein-like II"/>
    <property type="match status" value="1"/>
</dbReference>
<dbReference type="SUPFAM" id="SSF46785">
    <property type="entry name" value="Winged helix' DNA-binding domain"/>
    <property type="match status" value="1"/>
</dbReference>
<dbReference type="PROSITE" id="PS50931">
    <property type="entry name" value="HTH_LYSR"/>
    <property type="match status" value="1"/>
</dbReference>
<comment type="function">
    <text evidence="1">Negatively regulates the transcription of the flagellar master operon flhDC by binding to the upstream region of the operon.</text>
</comment>
<comment type="similarity">
    <text evidence="2">Belongs to the LysR transcriptional regulatory family.</text>
</comment>
<reference key="1">
    <citation type="journal article" date="2009" name="J. Bacteriol.">
        <title>Genomic sequencing reveals regulatory mutations and recombinational events in the widely used MC4100 lineage of Escherichia coli K-12.</title>
        <authorList>
            <person name="Ferenci T."/>
            <person name="Zhou Z."/>
            <person name="Betteridge T."/>
            <person name="Ren Y."/>
            <person name="Liu Y."/>
            <person name="Feng L."/>
            <person name="Reeves P.R."/>
            <person name="Wang L."/>
        </authorList>
    </citation>
    <scope>NUCLEOTIDE SEQUENCE [LARGE SCALE GENOMIC DNA]</scope>
    <source>
        <strain>K12 / MC4100 / BW2952</strain>
    </source>
</reference>